<evidence type="ECO:0000255" key="1">
    <source>
        <dbReference type="HAMAP-Rule" id="MF_00134"/>
    </source>
</evidence>
<sequence>MSDILDKIIAVKREEIAAALESAPLEELKVQASARDSRDFVGALRDKHAAGHAAVIAEVKKASPSKGVLREHFVPADIARSYAQHGAACLSVLTDERFFQGSARYLEQARAACALPVLRKDFIVDAYQVLEARAMGADAILLIAAALDTPLMIDLEAYAHSLGLAVLVEVHNRGELDEALKLKTPLVGINNRNLRTFETTIDTTLGMLDAIPDDRIVVTESGILSRADVERMEAAGVHTFLVGEAFMRAENPGAELARMFF</sequence>
<comment type="catalytic activity">
    <reaction evidence="1">
        <text>1-(2-carboxyphenylamino)-1-deoxy-D-ribulose 5-phosphate + H(+) = (1S,2R)-1-C-(indol-3-yl)glycerol 3-phosphate + CO2 + H2O</text>
        <dbReference type="Rhea" id="RHEA:23476"/>
        <dbReference type="ChEBI" id="CHEBI:15377"/>
        <dbReference type="ChEBI" id="CHEBI:15378"/>
        <dbReference type="ChEBI" id="CHEBI:16526"/>
        <dbReference type="ChEBI" id="CHEBI:58613"/>
        <dbReference type="ChEBI" id="CHEBI:58866"/>
        <dbReference type="EC" id="4.1.1.48"/>
    </reaction>
</comment>
<comment type="pathway">
    <text evidence="1">Amino-acid biosynthesis; L-tryptophan biosynthesis; L-tryptophan from chorismate: step 4/5.</text>
</comment>
<comment type="similarity">
    <text evidence="1">Belongs to the TrpC family.</text>
</comment>
<gene>
    <name evidence="1" type="primary">trpC</name>
    <name type="ordered locus">BPSL3053</name>
</gene>
<proteinExistence type="inferred from homology"/>
<dbReference type="EC" id="4.1.1.48" evidence="1"/>
<dbReference type="EMBL" id="BX571965">
    <property type="protein sequence ID" value="CAH37064.1"/>
    <property type="molecule type" value="Genomic_DNA"/>
</dbReference>
<dbReference type="RefSeq" id="WP_004522001.1">
    <property type="nucleotide sequence ID" value="NZ_CP009538.1"/>
</dbReference>
<dbReference type="RefSeq" id="YP_109648.1">
    <property type="nucleotide sequence ID" value="NC_006350.1"/>
</dbReference>
<dbReference type="SMR" id="Q63QH0"/>
<dbReference type="STRING" id="272560.BPSL3053"/>
<dbReference type="GeneID" id="93061661"/>
<dbReference type="KEGG" id="bps:BPSL3053"/>
<dbReference type="PATRIC" id="fig|272560.51.peg.2212"/>
<dbReference type="eggNOG" id="COG0134">
    <property type="taxonomic scope" value="Bacteria"/>
</dbReference>
<dbReference type="UniPathway" id="UPA00035">
    <property type="reaction ID" value="UER00043"/>
</dbReference>
<dbReference type="Proteomes" id="UP000000605">
    <property type="component" value="Chromosome 1"/>
</dbReference>
<dbReference type="GO" id="GO:0004425">
    <property type="term" value="F:indole-3-glycerol-phosphate synthase activity"/>
    <property type="evidence" value="ECO:0007669"/>
    <property type="project" value="UniProtKB-UniRule"/>
</dbReference>
<dbReference type="GO" id="GO:0004640">
    <property type="term" value="F:phosphoribosylanthranilate isomerase activity"/>
    <property type="evidence" value="ECO:0007669"/>
    <property type="project" value="TreeGrafter"/>
</dbReference>
<dbReference type="GO" id="GO:0000162">
    <property type="term" value="P:L-tryptophan biosynthetic process"/>
    <property type="evidence" value="ECO:0007669"/>
    <property type="project" value="UniProtKB-UniRule"/>
</dbReference>
<dbReference type="CDD" id="cd00331">
    <property type="entry name" value="IGPS"/>
    <property type="match status" value="1"/>
</dbReference>
<dbReference type="FunFam" id="3.20.20.70:FF:000024">
    <property type="entry name" value="Indole-3-glycerol phosphate synthase"/>
    <property type="match status" value="1"/>
</dbReference>
<dbReference type="Gene3D" id="3.20.20.70">
    <property type="entry name" value="Aldolase class I"/>
    <property type="match status" value="1"/>
</dbReference>
<dbReference type="HAMAP" id="MF_00134_B">
    <property type="entry name" value="IGPS_B"/>
    <property type="match status" value="1"/>
</dbReference>
<dbReference type="InterPro" id="IPR013785">
    <property type="entry name" value="Aldolase_TIM"/>
</dbReference>
<dbReference type="InterPro" id="IPR045186">
    <property type="entry name" value="Indole-3-glycerol_P_synth"/>
</dbReference>
<dbReference type="InterPro" id="IPR013798">
    <property type="entry name" value="Indole-3-glycerol_P_synth_dom"/>
</dbReference>
<dbReference type="InterPro" id="IPR001468">
    <property type="entry name" value="Indole-3-GlycerolPSynthase_CS"/>
</dbReference>
<dbReference type="InterPro" id="IPR011060">
    <property type="entry name" value="RibuloseP-bd_barrel"/>
</dbReference>
<dbReference type="NCBIfam" id="NF001373">
    <property type="entry name" value="PRK00278.1-6"/>
    <property type="match status" value="1"/>
</dbReference>
<dbReference type="NCBIfam" id="NF001377">
    <property type="entry name" value="PRK00278.2-4"/>
    <property type="match status" value="1"/>
</dbReference>
<dbReference type="PANTHER" id="PTHR22854:SF2">
    <property type="entry name" value="INDOLE-3-GLYCEROL-PHOSPHATE SYNTHASE"/>
    <property type="match status" value="1"/>
</dbReference>
<dbReference type="PANTHER" id="PTHR22854">
    <property type="entry name" value="TRYPTOPHAN BIOSYNTHESIS PROTEIN"/>
    <property type="match status" value="1"/>
</dbReference>
<dbReference type="Pfam" id="PF00218">
    <property type="entry name" value="IGPS"/>
    <property type="match status" value="1"/>
</dbReference>
<dbReference type="SUPFAM" id="SSF51366">
    <property type="entry name" value="Ribulose-phoshate binding barrel"/>
    <property type="match status" value="1"/>
</dbReference>
<dbReference type="PROSITE" id="PS00614">
    <property type="entry name" value="IGPS"/>
    <property type="match status" value="1"/>
</dbReference>
<feature type="chain" id="PRO_1000018461" description="Indole-3-glycerol phosphate synthase">
    <location>
        <begin position="1"/>
        <end position="261"/>
    </location>
</feature>
<organism>
    <name type="scientific">Burkholderia pseudomallei (strain K96243)</name>
    <dbReference type="NCBI Taxonomy" id="272560"/>
    <lineage>
        <taxon>Bacteria</taxon>
        <taxon>Pseudomonadati</taxon>
        <taxon>Pseudomonadota</taxon>
        <taxon>Betaproteobacteria</taxon>
        <taxon>Burkholderiales</taxon>
        <taxon>Burkholderiaceae</taxon>
        <taxon>Burkholderia</taxon>
        <taxon>pseudomallei group</taxon>
    </lineage>
</organism>
<reference key="1">
    <citation type="journal article" date="2004" name="Proc. Natl. Acad. Sci. U.S.A.">
        <title>Genomic plasticity of the causative agent of melioidosis, Burkholderia pseudomallei.</title>
        <authorList>
            <person name="Holden M.T.G."/>
            <person name="Titball R.W."/>
            <person name="Peacock S.J."/>
            <person name="Cerdeno-Tarraga A.-M."/>
            <person name="Atkins T."/>
            <person name="Crossman L.C."/>
            <person name="Pitt T."/>
            <person name="Churcher C."/>
            <person name="Mungall K.L."/>
            <person name="Bentley S.D."/>
            <person name="Sebaihia M."/>
            <person name="Thomson N.R."/>
            <person name="Bason N."/>
            <person name="Beacham I.R."/>
            <person name="Brooks K."/>
            <person name="Brown K.A."/>
            <person name="Brown N.F."/>
            <person name="Challis G.L."/>
            <person name="Cherevach I."/>
            <person name="Chillingworth T."/>
            <person name="Cronin A."/>
            <person name="Crossett B."/>
            <person name="Davis P."/>
            <person name="DeShazer D."/>
            <person name="Feltwell T."/>
            <person name="Fraser A."/>
            <person name="Hance Z."/>
            <person name="Hauser H."/>
            <person name="Holroyd S."/>
            <person name="Jagels K."/>
            <person name="Keith K.E."/>
            <person name="Maddison M."/>
            <person name="Moule S."/>
            <person name="Price C."/>
            <person name="Quail M.A."/>
            <person name="Rabbinowitsch E."/>
            <person name="Rutherford K."/>
            <person name="Sanders M."/>
            <person name="Simmonds M."/>
            <person name="Songsivilai S."/>
            <person name="Stevens K."/>
            <person name="Tumapa S."/>
            <person name="Vesaratchavest M."/>
            <person name="Whitehead S."/>
            <person name="Yeats C."/>
            <person name="Barrell B.G."/>
            <person name="Oyston P.C.F."/>
            <person name="Parkhill J."/>
        </authorList>
    </citation>
    <scope>NUCLEOTIDE SEQUENCE [LARGE SCALE GENOMIC DNA]</scope>
    <source>
        <strain>K96243</strain>
    </source>
</reference>
<protein>
    <recommendedName>
        <fullName evidence="1">Indole-3-glycerol phosphate synthase</fullName>
        <shortName evidence="1">IGPS</shortName>
        <ecNumber evidence="1">4.1.1.48</ecNumber>
    </recommendedName>
</protein>
<keyword id="KW-0028">Amino-acid biosynthesis</keyword>
<keyword id="KW-0057">Aromatic amino acid biosynthesis</keyword>
<keyword id="KW-0210">Decarboxylase</keyword>
<keyword id="KW-0456">Lyase</keyword>
<keyword id="KW-1185">Reference proteome</keyword>
<keyword id="KW-0822">Tryptophan biosynthesis</keyword>
<name>TRPC_BURPS</name>
<accession>Q63QH0</accession>